<proteinExistence type="predicted"/>
<keyword id="KW-1185">Reference proteome</keyword>
<gene>
    <name type="primary">31</name>
</gene>
<organismHost>
    <name type="scientific">Mycobacterium</name>
    <dbReference type="NCBI Taxonomy" id="1763"/>
</organismHost>
<protein>
    <recommendedName>
        <fullName>Gene 31 protein</fullName>
    </recommendedName>
    <alternativeName>
        <fullName>Gp31</fullName>
    </alternativeName>
</protein>
<dbReference type="EMBL" id="Z18946">
    <property type="protein sequence ID" value="CAA79407.1"/>
    <property type="molecule type" value="Genomic_DNA"/>
</dbReference>
<dbReference type="PIR" id="S30976">
    <property type="entry name" value="S30976"/>
</dbReference>
<dbReference type="RefSeq" id="NP_039695.1">
    <property type="nucleotide sequence ID" value="NC_001335.1"/>
</dbReference>
<dbReference type="GeneID" id="2942964"/>
<dbReference type="KEGG" id="vg:2942964"/>
<dbReference type="OrthoDB" id="2324at10239"/>
<dbReference type="Proteomes" id="UP000002123">
    <property type="component" value="Genome"/>
</dbReference>
<dbReference type="InterPro" id="IPR055681">
    <property type="entry name" value="DUF7257"/>
</dbReference>
<dbReference type="InterPro" id="IPR056923">
    <property type="entry name" value="Minor_tail_gp31_C"/>
</dbReference>
<dbReference type="Pfam" id="PF23918">
    <property type="entry name" value="DUF7257"/>
    <property type="match status" value="1"/>
</dbReference>
<dbReference type="Pfam" id="PF24243">
    <property type="entry name" value="Phage_tail_C"/>
    <property type="match status" value="1"/>
</dbReference>
<reference key="1">
    <citation type="journal article" date="1993" name="Mol. Microbiol.">
        <title>DNA sequence, structure and gene expression of mycobacteriophage L5: a phage system for mycobacterial genetics.</title>
        <authorList>
            <person name="Hatfull G.F."/>
            <person name="Sarkis G.J."/>
        </authorList>
    </citation>
    <scope>NUCLEOTIDE SEQUENCE [LARGE SCALE GENOMIC DNA]</scope>
</reference>
<name>VG31_BPML5</name>
<sequence>MTYPTNPLEAIGADGAFEIGGGDWSFGQDYTEQAIRALFTMPAVTMENALGLLEEHLLKLPLEALQGFKDMIPDWVEGAFDTVTGAVQAIMNALQDGPLFLKFAEFQLFLQRLLNNPAEVIGEIPQTLIDGLQDALNTVNNTIQTIVDMLLQALGITPEGELIDRIFDLSDEMEWLQTAASNAATGIQDTWNKFWGALTGRVPDQDQTVAEPAERIGELAGTTSANSSAIAELQRRLDNQQNAGGVAGGDDFERLNISGWDIRYSNGSSGRGYYRADGHQLVWMDEGNQQNTATFVRTNPADEKTATDYQKMTLVVGTISGEVQTVFPPQGGSHTRLWVRVNDNAPTVGITDGVFVEIGGVSKAQIGYRRNGNDTFVGSMVDCTWGAGSIFALTAGTANGAEKFEVSKNGPVLATWSDDGVVSAMGANYRRWGWEGQARNRNLGQGTPNSVTRVTITDNDPTGAGGGAVNVGGDVVGVLPIENGGTGASTASAARTALGIDDLVEDMSDVVRGSVEGLPLIPKIWVGTEAQYTALATKDQSTLYFRTA</sequence>
<feature type="chain" id="PRO_0000164751" description="Gene 31 protein">
    <location>
        <begin position="1"/>
        <end position="548"/>
    </location>
</feature>
<organism>
    <name type="scientific">Mycobacterium phage L5</name>
    <name type="common">Mycobacteriophage L5</name>
    <dbReference type="NCBI Taxonomy" id="31757"/>
    <lineage>
        <taxon>Viruses</taxon>
        <taxon>Duplodnaviria</taxon>
        <taxon>Heunggongvirae</taxon>
        <taxon>Uroviricota</taxon>
        <taxon>Caudoviricetes</taxon>
        <taxon>Fromanvirus</taxon>
    </lineage>
</organism>
<accession>Q05240</accession>